<reference key="1">
    <citation type="journal article" date="1990" name="Mol. Cell. Biol.">
        <title>A genomic clone encoding a novel proliferation-dependent histone H2A.1 mRNA enriched in the poly(A)+ fraction.</title>
        <authorList>
            <person name="Fecker L."/>
            <person name="Ekblom P."/>
            <person name="Kurkinen M."/>
            <person name="Ekblom M."/>
        </authorList>
    </citation>
    <scope>NUCLEOTIDE SEQUENCE [GENOMIC DNA]</scope>
</reference>
<reference key="2">
    <citation type="journal article" date="2002" name="Genomics">
        <title>The human and mouse replication-dependent histone genes.</title>
        <authorList>
            <person name="Marzluff W.F."/>
            <person name="Gongidi P."/>
            <person name="Woods K.R."/>
            <person name="Jin J."/>
            <person name="Maltais L.J."/>
        </authorList>
    </citation>
    <scope>NUCLEOTIDE SEQUENCE [GENOMIC DNA]</scope>
</reference>
<reference key="3">
    <citation type="journal article" date="2005" name="Science">
        <title>The transcriptional landscape of the mammalian genome.</title>
        <authorList>
            <person name="Carninci P."/>
            <person name="Kasukawa T."/>
            <person name="Katayama S."/>
            <person name="Gough J."/>
            <person name="Frith M.C."/>
            <person name="Maeda N."/>
            <person name="Oyama R."/>
            <person name="Ravasi T."/>
            <person name="Lenhard B."/>
            <person name="Wells C."/>
            <person name="Kodzius R."/>
            <person name="Shimokawa K."/>
            <person name="Bajic V.B."/>
            <person name="Brenner S.E."/>
            <person name="Batalov S."/>
            <person name="Forrest A.R."/>
            <person name="Zavolan M."/>
            <person name="Davis M.J."/>
            <person name="Wilming L.G."/>
            <person name="Aidinis V."/>
            <person name="Allen J.E."/>
            <person name="Ambesi-Impiombato A."/>
            <person name="Apweiler R."/>
            <person name="Aturaliya R.N."/>
            <person name="Bailey T.L."/>
            <person name="Bansal M."/>
            <person name="Baxter L."/>
            <person name="Beisel K.W."/>
            <person name="Bersano T."/>
            <person name="Bono H."/>
            <person name="Chalk A.M."/>
            <person name="Chiu K.P."/>
            <person name="Choudhary V."/>
            <person name="Christoffels A."/>
            <person name="Clutterbuck D.R."/>
            <person name="Crowe M.L."/>
            <person name="Dalla E."/>
            <person name="Dalrymple B.P."/>
            <person name="de Bono B."/>
            <person name="Della Gatta G."/>
            <person name="di Bernardo D."/>
            <person name="Down T."/>
            <person name="Engstrom P."/>
            <person name="Fagiolini M."/>
            <person name="Faulkner G."/>
            <person name="Fletcher C.F."/>
            <person name="Fukushima T."/>
            <person name="Furuno M."/>
            <person name="Futaki S."/>
            <person name="Gariboldi M."/>
            <person name="Georgii-Hemming P."/>
            <person name="Gingeras T.R."/>
            <person name="Gojobori T."/>
            <person name="Green R.E."/>
            <person name="Gustincich S."/>
            <person name="Harbers M."/>
            <person name="Hayashi Y."/>
            <person name="Hensch T.K."/>
            <person name="Hirokawa N."/>
            <person name="Hill D."/>
            <person name="Huminiecki L."/>
            <person name="Iacono M."/>
            <person name="Ikeo K."/>
            <person name="Iwama A."/>
            <person name="Ishikawa T."/>
            <person name="Jakt M."/>
            <person name="Kanapin A."/>
            <person name="Katoh M."/>
            <person name="Kawasawa Y."/>
            <person name="Kelso J."/>
            <person name="Kitamura H."/>
            <person name="Kitano H."/>
            <person name="Kollias G."/>
            <person name="Krishnan S.P."/>
            <person name="Kruger A."/>
            <person name="Kummerfeld S.K."/>
            <person name="Kurochkin I.V."/>
            <person name="Lareau L.F."/>
            <person name="Lazarevic D."/>
            <person name="Lipovich L."/>
            <person name="Liu J."/>
            <person name="Liuni S."/>
            <person name="McWilliam S."/>
            <person name="Madan Babu M."/>
            <person name="Madera M."/>
            <person name="Marchionni L."/>
            <person name="Matsuda H."/>
            <person name="Matsuzawa S."/>
            <person name="Miki H."/>
            <person name="Mignone F."/>
            <person name="Miyake S."/>
            <person name="Morris K."/>
            <person name="Mottagui-Tabar S."/>
            <person name="Mulder N."/>
            <person name="Nakano N."/>
            <person name="Nakauchi H."/>
            <person name="Ng P."/>
            <person name="Nilsson R."/>
            <person name="Nishiguchi S."/>
            <person name="Nishikawa S."/>
            <person name="Nori F."/>
            <person name="Ohara O."/>
            <person name="Okazaki Y."/>
            <person name="Orlando V."/>
            <person name="Pang K.C."/>
            <person name="Pavan W.J."/>
            <person name="Pavesi G."/>
            <person name="Pesole G."/>
            <person name="Petrovsky N."/>
            <person name="Piazza S."/>
            <person name="Reed J."/>
            <person name="Reid J.F."/>
            <person name="Ring B.Z."/>
            <person name="Ringwald M."/>
            <person name="Rost B."/>
            <person name="Ruan Y."/>
            <person name="Salzberg S.L."/>
            <person name="Sandelin A."/>
            <person name="Schneider C."/>
            <person name="Schoenbach C."/>
            <person name="Sekiguchi K."/>
            <person name="Semple C.A."/>
            <person name="Seno S."/>
            <person name="Sessa L."/>
            <person name="Sheng Y."/>
            <person name="Shibata Y."/>
            <person name="Shimada H."/>
            <person name="Shimada K."/>
            <person name="Silva D."/>
            <person name="Sinclair B."/>
            <person name="Sperling S."/>
            <person name="Stupka E."/>
            <person name="Sugiura K."/>
            <person name="Sultana R."/>
            <person name="Takenaka Y."/>
            <person name="Taki K."/>
            <person name="Tammoja K."/>
            <person name="Tan S.L."/>
            <person name="Tang S."/>
            <person name="Taylor M.S."/>
            <person name="Tegner J."/>
            <person name="Teichmann S.A."/>
            <person name="Ueda H.R."/>
            <person name="van Nimwegen E."/>
            <person name="Verardo R."/>
            <person name="Wei C.L."/>
            <person name="Yagi K."/>
            <person name="Yamanishi H."/>
            <person name="Zabarovsky E."/>
            <person name="Zhu S."/>
            <person name="Zimmer A."/>
            <person name="Hide W."/>
            <person name="Bult C."/>
            <person name="Grimmond S.M."/>
            <person name="Teasdale R.D."/>
            <person name="Liu E.T."/>
            <person name="Brusic V."/>
            <person name="Quackenbush J."/>
            <person name="Wahlestedt C."/>
            <person name="Mattick J.S."/>
            <person name="Hume D.A."/>
            <person name="Kai C."/>
            <person name="Sasaki D."/>
            <person name="Tomaru Y."/>
            <person name="Fukuda S."/>
            <person name="Kanamori-Katayama M."/>
            <person name="Suzuki M."/>
            <person name="Aoki J."/>
            <person name="Arakawa T."/>
            <person name="Iida J."/>
            <person name="Imamura K."/>
            <person name="Itoh M."/>
            <person name="Kato T."/>
            <person name="Kawaji H."/>
            <person name="Kawagashira N."/>
            <person name="Kawashima T."/>
            <person name="Kojima M."/>
            <person name="Kondo S."/>
            <person name="Konno H."/>
            <person name="Nakano K."/>
            <person name="Ninomiya N."/>
            <person name="Nishio T."/>
            <person name="Okada M."/>
            <person name="Plessy C."/>
            <person name="Shibata K."/>
            <person name="Shiraki T."/>
            <person name="Suzuki S."/>
            <person name="Tagami M."/>
            <person name="Waki K."/>
            <person name="Watahiki A."/>
            <person name="Okamura-Oho Y."/>
            <person name="Suzuki H."/>
            <person name="Kawai J."/>
            <person name="Hayashizaki Y."/>
        </authorList>
    </citation>
    <scope>NUCLEOTIDE SEQUENCE [LARGE SCALE MRNA]</scope>
    <source>
        <strain evidence="16">C57BL/6J</strain>
        <tissue evidence="16">Heart</tissue>
    </source>
</reference>
<reference key="4">
    <citation type="journal article" date="2009" name="PLoS Biol.">
        <title>Lineage-specific biology revealed by a finished genome assembly of the mouse.</title>
        <authorList>
            <person name="Church D.M."/>
            <person name="Goodstadt L."/>
            <person name="Hillier L.W."/>
            <person name="Zody M.C."/>
            <person name="Goldstein S."/>
            <person name="She X."/>
            <person name="Bult C.J."/>
            <person name="Agarwala R."/>
            <person name="Cherry J.L."/>
            <person name="DiCuccio M."/>
            <person name="Hlavina W."/>
            <person name="Kapustin Y."/>
            <person name="Meric P."/>
            <person name="Maglott D."/>
            <person name="Birtle Z."/>
            <person name="Marques A.C."/>
            <person name="Graves T."/>
            <person name="Zhou S."/>
            <person name="Teague B."/>
            <person name="Potamousis K."/>
            <person name="Churas C."/>
            <person name="Place M."/>
            <person name="Herschleb J."/>
            <person name="Runnheim R."/>
            <person name="Forrest D."/>
            <person name="Amos-Landgraf J."/>
            <person name="Schwartz D.C."/>
            <person name="Cheng Z."/>
            <person name="Lindblad-Toh K."/>
            <person name="Eichler E.E."/>
            <person name="Ponting C.P."/>
        </authorList>
    </citation>
    <scope>NUCLEOTIDE SEQUENCE [LARGE SCALE GENOMIC DNA]</scope>
    <source>
        <strain>C57BL/6J</strain>
    </source>
</reference>
<reference key="5">
    <citation type="journal article" date="2004" name="Genome Res.">
        <title>The status, quality, and expansion of the NIH full-length cDNA project: the Mammalian Gene Collection (MGC).</title>
        <authorList>
            <consortium name="The MGC Project Team"/>
        </authorList>
    </citation>
    <scope>NUCLEOTIDE SEQUENCE [LARGE SCALE MRNA]</scope>
    <source>
        <strain evidence="14 15">C57BL/6J</strain>
        <strain evidence="15">FVB/N</strain>
        <tissue evidence="15">Mammary tumor</tissue>
        <tissue evidence="14">Thymus</tissue>
    </source>
</reference>
<reference key="6">
    <citation type="journal article" date="1981" name="J. Biol. Chem.">
        <title>Quantitative determination of histone modification. H2A acetylation and phosphorylation.</title>
        <authorList>
            <person name="Pantazis P."/>
            <person name="Bonner W.M."/>
        </authorList>
    </citation>
    <scope>PHOSPHORYLATION AT SER-2</scope>
    <scope>ACETYLATION AT SER-2 AND LYS-6</scope>
</reference>
<reference key="7">
    <citation type="journal article" date="2004" name="Dev. Cell">
        <title>Polycomb group proteins Ring1A/B link ubiquitylation of histone H2A to heritable gene silencing and X inactivation.</title>
        <authorList>
            <person name="de Napoles M."/>
            <person name="Mermoud J.E."/>
            <person name="Wakao R."/>
            <person name="Tang Y.A."/>
            <person name="Endoh M."/>
            <person name="Appanah R."/>
            <person name="Nesterova T.B."/>
            <person name="Silva J."/>
            <person name="Otte A.P."/>
            <person name="Vidal M."/>
            <person name="Koseki H."/>
            <person name="Brockdorff N."/>
        </authorList>
    </citation>
    <scope>UBIQUITINATION AT LYS-120</scope>
</reference>
<reference key="8">
    <citation type="journal article" date="2004" name="J. Biol. Chem.">
        <title>Ring1b-mediated H2A ubiquitination associates with inactive X chromosomes and is involved in initiation of X inactivation.</title>
        <authorList>
            <person name="Fang J."/>
            <person name="Chen T."/>
            <person name="Chadwick B."/>
            <person name="Li E."/>
            <person name="Zhang Y."/>
        </authorList>
    </citation>
    <scope>UBIQUITINATION AT LYS-120</scope>
</reference>
<reference key="9">
    <citation type="journal article" date="2006" name="Nat. Cell Biol.">
        <title>Blimp1 associates with Prmt5 and directs histone arginine methylation in mouse germ cells.</title>
        <authorList>
            <person name="Ancelin K."/>
            <person name="Lange U.C."/>
            <person name="Hajkova P."/>
            <person name="Schneider R."/>
            <person name="Bannister A.J."/>
            <person name="Kouzarides T."/>
            <person name="Surani M.A."/>
        </authorList>
    </citation>
    <scope>METHYLATION AT ARG-4</scope>
</reference>
<reference key="10">
    <citation type="journal article" date="2011" name="Cell">
        <title>Identification of 67 histone marks and histone lysine crotonylation as a new type of histone modification.</title>
        <authorList>
            <person name="Tan M."/>
            <person name="Luo H."/>
            <person name="Lee S."/>
            <person name="Jin F."/>
            <person name="Yang J.S."/>
            <person name="Montellier E."/>
            <person name="Buchou T."/>
            <person name="Cheng Z."/>
            <person name="Rousseaux S."/>
            <person name="Rajagopal N."/>
            <person name="Lu Z."/>
            <person name="Ye Z."/>
            <person name="Zhu Q."/>
            <person name="Wysocka J."/>
            <person name="Ye Y."/>
            <person name="Khochbin S."/>
            <person name="Ren B."/>
            <person name="Zhao Y."/>
        </authorList>
    </citation>
    <scope>CROTONYLATION AT LYS-37 AND LYS-119</scope>
</reference>
<reference key="11">
    <citation type="journal article" date="2014" name="Nat. Chem. Biol.">
        <title>Lysine 2-hydroxyisobutyrylation is a widely distributed active histone mark.</title>
        <authorList>
            <person name="Dai L."/>
            <person name="Peng C."/>
            <person name="Montellier E."/>
            <person name="Lu Z."/>
            <person name="Chen Y."/>
            <person name="Ishii H."/>
            <person name="Debernardi A."/>
            <person name="Buchou T."/>
            <person name="Rousseaux S."/>
            <person name="Jin F."/>
            <person name="Sabari B.R."/>
            <person name="Deng Z."/>
            <person name="Allis C.D."/>
            <person name="Ren B."/>
            <person name="Khochbin S."/>
            <person name="Zhao Y."/>
        </authorList>
    </citation>
    <scope>HYDROXYBUTYRYLATION AT LYS-6; LYS-10; LYS-37; LYS-75; LYS-76; LYS-96 AND LYS-119</scope>
</reference>
<reference key="12">
    <citation type="journal article" date="2014" name="Nature">
        <title>Glutamine methylation in histone H2A is an RNA-polymerase-I-dedicated modification.</title>
        <authorList>
            <person name="Tessarz P."/>
            <person name="Santos-Rosa H."/>
            <person name="Robson S.C."/>
            <person name="Sylvestersen K.B."/>
            <person name="Nelson C.J."/>
            <person name="Nielsen M.L."/>
            <person name="Kouzarides T."/>
        </authorList>
    </citation>
    <scope>METHYLATION AT GLN-105</scope>
</reference>
<reference key="13">
    <citation type="journal article" date="2016" name="Mol. Cell">
        <title>Metabolic regulation of gene expression by histone lysine beta-hydroxybutyrylation.</title>
        <authorList>
            <person name="Xie Z."/>
            <person name="Zhang D."/>
            <person name="Chung D."/>
            <person name="Tang Z."/>
            <person name="Huang H."/>
            <person name="Dai L."/>
            <person name="Qi S."/>
            <person name="Li J."/>
            <person name="Colak G."/>
            <person name="Chen Y."/>
            <person name="Xia C."/>
            <person name="Peng C."/>
            <person name="Ruan H."/>
            <person name="Kirkey M."/>
            <person name="Wang D."/>
            <person name="Jensen L.M."/>
            <person name="Kwon O.K."/>
            <person name="Lee S."/>
            <person name="Pletcher S.D."/>
            <person name="Tan M."/>
            <person name="Lombard D.B."/>
            <person name="White K.P."/>
            <person name="Zhao H."/>
            <person name="Li J."/>
            <person name="Roeder R.G."/>
            <person name="Yang X."/>
            <person name="Zhao Y."/>
        </authorList>
    </citation>
    <scope>HYDROXYBUTYRYLATION AT LYS-6; LYS-37; LYS-120 AND LYS-126</scope>
</reference>
<keyword id="KW-0007">Acetylation</keyword>
<keyword id="KW-0158">Chromosome</keyword>
<keyword id="KW-0164">Citrullination</keyword>
<keyword id="KW-0238">DNA-binding</keyword>
<keyword id="KW-0379">Hydroxylation</keyword>
<keyword id="KW-1017">Isopeptide bond</keyword>
<keyword id="KW-0488">Methylation</keyword>
<keyword id="KW-0544">Nucleosome core</keyword>
<keyword id="KW-0539">Nucleus</keyword>
<keyword id="KW-0597">Phosphoprotein</keyword>
<keyword id="KW-1185">Reference proteome</keyword>
<keyword id="KW-0832">Ubl conjugation</keyword>
<name>H2A1O_MOUSE</name>
<accession>C0HKE8</accession>
<accession>P10812</accession>
<accession>P22752</accession>
<accession>Q149U0</accession>
<accession>Q5SZZ2</accession>
<feature type="initiator methionine" description="Removed" evidence="1">
    <location>
        <position position="1"/>
    </location>
</feature>
<feature type="chain" id="PRO_0000439722" description="Histone H2A type 1-O">
    <location>
        <begin position="2"/>
        <end position="130"/>
    </location>
</feature>
<feature type="region of interest" description="Disordered" evidence="4">
    <location>
        <begin position="1"/>
        <end position="22"/>
    </location>
</feature>
<feature type="compositionally biased region" description="Basic residues" evidence="4">
    <location>
        <begin position="7"/>
        <end position="19"/>
    </location>
</feature>
<feature type="modified residue" description="N-acetylserine" evidence="12">
    <location>
        <position position="2"/>
    </location>
</feature>
<feature type="modified residue" description="Phosphoserine; by RPS6KA5" evidence="12">
    <location>
        <position position="2"/>
    </location>
</feature>
<feature type="modified residue" description="Citrulline; alternate" evidence="3">
    <location>
        <position position="4"/>
    </location>
</feature>
<feature type="modified residue" description="Symmetric dimethylarginine; by PRMT5; alternate" evidence="7">
    <location>
        <position position="4"/>
    </location>
</feature>
<feature type="modified residue" description="N6-(2-hydroxyisobutyryl)lysine; alternate" evidence="10">
    <location>
        <position position="6"/>
    </location>
</feature>
<feature type="modified residue" description="N6-(beta-hydroxybutyryl)lysine; alternate" evidence="11">
    <location>
        <position position="6"/>
    </location>
</feature>
<feature type="modified residue" description="N6-acetyllysine; alternate" evidence="12">
    <location>
        <position position="6"/>
    </location>
</feature>
<feature type="modified residue" description="N6-(2-hydroxyisobutyryl)lysine; alternate" evidence="10">
    <location>
        <position position="10"/>
    </location>
</feature>
<feature type="modified residue" description="N6-lactoyllysine; alternate" evidence="2">
    <location>
        <position position="10"/>
    </location>
</feature>
<feature type="modified residue" description="N6-succinyllysine; alternate" evidence="1">
    <location>
        <position position="10"/>
    </location>
</feature>
<feature type="modified residue" description="N6-(2-hydroxyisobutyryl)lysine; alternate" evidence="10">
    <location>
        <position position="37"/>
    </location>
</feature>
<feature type="modified residue" description="N6-(beta-hydroxybutyryl)lysine; alternate" evidence="11">
    <location>
        <position position="37"/>
    </location>
</feature>
<feature type="modified residue" description="N6-crotonyllysine; alternate" evidence="8">
    <location>
        <position position="37"/>
    </location>
</feature>
<feature type="modified residue" description="N6-(2-hydroxyisobutyryl)lysine" evidence="10">
    <location>
        <position position="75"/>
    </location>
</feature>
<feature type="modified residue" description="N6-(2-hydroxyisobutyryl)lysine" evidence="10">
    <location>
        <position position="76"/>
    </location>
</feature>
<feature type="modified residue" description="N6-(2-hydroxyisobutyryl)lysine; alternate" evidence="10">
    <location>
        <position position="96"/>
    </location>
</feature>
<feature type="modified residue" description="N6-glutaryllysine; alternate" evidence="3">
    <location>
        <position position="96"/>
    </location>
</feature>
<feature type="modified residue" description="N6-succinyllysine; alternate" evidence="1">
    <location>
        <position position="96"/>
    </location>
</feature>
<feature type="modified residue" description="N5-methylglutamine" evidence="9">
    <location>
        <position position="105"/>
    </location>
</feature>
<feature type="modified residue" description="N6-(2-hydroxyisobutyryl)lysine; alternate" evidence="10">
    <location>
        <position position="119"/>
    </location>
</feature>
<feature type="modified residue" description="N6-crotonyllysine; alternate" evidence="8">
    <location>
        <position position="119"/>
    </location>
</feature>
<feature type="modified residue" description="N6-glutaryllysine; alternate" evidence="3">
    <location>
        <position position="119"/>
    </location>
</feature>
<feature type="modified residue" description="N6-(beta-hydroxybutyryl)lysine; alternate" evidence="11">
    <location>
        <position position="120"/>
    </location>
</feature>
<feature type="modified residue" description="N6-crotonyllysine; alternate" evidence="3">
    <location>
        <position position="120"/>
    </location>
</feature>
<feature type="modified residue" description="N6-glutaryllysine; alternate" evidence="3">
    <location>
        <position position="120"/>
    </location>
</feature>
<feature type="modified residue" description="Phosphothreonine; by DCAF1" evidence="1">
    <location>
        <position position="121"/>
    </location>
</feature>
<feature type="modified residue" description="N6-(beta-hydroxybutyryl)lysine; alternate" evidence="11">
    <location>
        <position position="126"/>
    </location>
</feature>
<feature type="modified residue" description="N6-crotonyllysine; alternate" evidence="3">
    <location>
        <position position="126"/>
    </location>
</feature>
<feature type="modified residue" description="N6-glutaryllysine; alternate" evidence="3">
    <location>
        <position position="126"/>
    </location>
</feature>
<feature type="cross-link" description="Glycyl lysine isopeptide (Lys-Gly) (interchain with G-Cter in ubiquitin)" evidence="1">
    <location>
        <position position="14"/>
    </location>
</feature>
<feature type="cross-link" description="Glycyl lysine isopeptide (Lys-Gly) (interchain with G-Cter in ubiquitin)" evidence="1">
    <location>
        <position position="16"/>
    </location>
</feature>
<feature type="cross-link" description="Glycyl lysine isopeptide (Lys-Gly) (interchain with G-Cter in ubiquitin); alternate" evidence="5 6">
    <location>
        <position position="120"/>
    </location>
</feature>
<comment type="function">
    <text>Core component of nucleosome. Nucleosomes wrap and compact DNA into chromatin, limiting DNA accessibility to the cellular machineries which require DNA as a template. Histones thereby play a central role in transcription regulation, DNA repair, DNA replication and chromosomal stability. DNA accessibility is regulated via a complex set of post-translational modifications of histones, also called histone code, and nucleosome remodeling.</text>
</comment>
<comment type="subunit">
    <text>The nucleosome is a histone octamer containing two molecules each of H2A, H2B, H3 and H4 assembled in one H3-H4 heterotetramer and two H2A-H2B heterodimers. The octamer wraps approximately 147 bp of DNA.</text>
</comment>
<comment type="subcellular location">
    <subcellularLocation>
        <location>Nucleus</location>
    </subcellularLocation>
    <subcellularLocation>
        <location>Chromosome</location>
    </subcellularLocation>
</comment>
<comment type="PTM">
    <text evidence="3">Deiminated on Arg-4 in granulocytes upon calcium entry.</text>
</comment>
<comment type="PTM">
    <text evidence="3 5 6 9">Monoubiquitination of Lys-120 (H2AK119Ub) by RING1, TRIM37 and RNF2/RING2 complex gives a specific tag for epigenetic transcriptional repression and participates in X chromosome inactivation of female mammals. It is involved in the initiation of both imprinted and random X inactivation. Ubiquitinated H2A is enriched in inactive X chromosome chromatin. Ubiquitination of H2A functions downstream of methylation of 'Lys-27' of histone H3 (H3K27me). H2AK119Ub by RNF2/RING2 can also be induced by ultraviolet and may be involved in DNA repair. Following DNA double-strand breaks (DSBs), it is ubiquitinated through 'Lys-63' linkage of ubiquitin moieties by the E2 ligase UBE2N and the E3 ligases RNF8 and RNF168, leading to the recruitment of repair proteins to sites of DNA damage. Ubiquitination at Lys-14 and Lys-16 (H2AK13Ub and H2AK15Ub, respectively) in response to DNA damage is initiated by RNF168 that mediates monoubiquitination at these 2 sites, and 'Lys-63'-linked ubiquitin are then conjugated to monoubiquitin; RNF8 is able to extend 'Lys-63'-linked ubiquitin chains in vitro. Deubiquitinated by USP51 at Lys-14 and Lys-16 (H2AK13Ub and H2AK15Ub, respectively) after damaged DNA is repaired (By similarity). H2AK119Ub and ionizing radiation-induced 'Lys-63'-linked ubiquitination (H2AK13Ub and H2AK15Ub) are distinct events.</text>
</comment>
<comment type="PTM">
    <text evidence="3 12">Phosphorylation on Ser-2 (H2AS1ph) is enhanced during mitosis. Phosphorylation on Ser-2 by RPS6KA5/MSK1 directly represses transcription. Acetylation of H3 inhibits Ser-2 phosphorylation by RPS6KA5/MSK1. Phosphorylation at Thr-121 (H2AT120ph) by DCAF1 is present in the regulatory region of many tumor suppresor genes and down-regulates their transcription.</text>
</comment>
<comment type="PTM">
    <text evidence="7">Symmetric dimethylation on Arg-4 by the PRDM1/PRMT5 complex may play a crucial role in the germ-cell lineage.</text>
</comment>
<comment type="PTM">
    <text evidence="9">Glutamine methylation at Gln-105 (H2AQ104me) by FBL is specifically dedicated to polymerase I. It is present at 35S ribosomal DNA locus and impairs binding of the FACT complex.</text>
</comment>
<comment type="PTM">
    <text evidence="8">Crotonylation (Kcr) is specifically present in male germ cells and marks testis-specific genes in post-meiotic cells, including X-linked genes that escape sex chromosome inactivation in haploid cells. Crotonylation marks active promoters and enhancers and confers resistance to transcriptional repressors. It is also associated with post-meiotically activated genes on autosomes.</text>
</comment>
<comment type="PTM">
    <text evidence="11">Hydroxybutyrylation of histones is induced by starvation.</text>
</comment>
<comment type="PTM">
    <text evidence="2">Lactylated in macrophages by EP300/P300 by using lactoyl-CoA directly derived from endogenous or exogenous lactate, leading to stimulates gene transcription.</text>
</comment>
<comment type="similarity">
    <text evidence="13">Belongs to the histone H2A family.</text>
</comment>
<proteinExistence type="evidence at protein level"/>
<gene>
    <name evidence="17" type="primary">Hist1h2ao</name>
</gene>
<dbReference type="EMBL" id="M37736">
    <property type="protein sequence ID" value="AAA37809.1"/>
    <property type="molecule type" value="Genomic_DNA"/>
</dbReference>
<dbReference type="EMBL" id="AY158913">
    <property type="protein sequence ID" value="AAO06223.1"/>
    <property type="molecule type" value="Genomic_DNA"/>
</dbReference>
<dbReference type="EMBL" id="AK145443">
    <property type="protein sequence ID" value="BAE26439.1"/>
    <property type="molecule type" value="mRNA"/>
</dbReference>
<dbReference type="EMBL" id="AK146846">
    <property type="protein sequence ID" value="BAE27477.1"/>
    <property type="molecule type" value="mRNA"/>
</dbReference>
<dbReference type="EMBL" id="AL589879">
    <property type="protein sequence ID" value="CAI25463.1"/>
    <property type="molecule type" value="Genomic_DNA"/>
</dbReference>
<dbReference type="EMBL" id="AL589879">
    <property type="protein sequence ID" value="CAI25466.1"/>
    <property type="molecule type" value="Genomic_DNA"/>
</dbReference>
<dbReference type="EMBL" id="BC062251">
    <property type="protein sequence ID" value="AAH62251.1"/>
    <property type="molecule type" value="mRNA"/>
</dbReference>
<dbReference type="EMBL" id="BC090402">
    <property type="protein sequence ID" value="AAH90402.1"/>
    <property type="molecule type" value="mRNA"/>
</dbReference>
<dbReference type="EMBL" id="BC110626">
    <property type="protein sequence ID" value="AAI10627.1"/>
    <property type="molecule type" value="mRNA"/>
</dbReference>
<dbReference type="EMBL" id="BC133661">
    <property type="protein sequence ID" value="AAI33662.1"/>
    <property type="molecule type" value="mRNA"/>
</dbReference>
<dbReference type="CCDS" id="CCDS49214.1"/>
<dbReference type="RefSeq" id="NP_001171015.1">
    <property type="nucleotide sequence ID" value="NM_001177544.2"/>
</dbReference>
<dbReference type="SMR" id="C0HKE8"/>
<dbReference type="FunCoup" id="C0HKE8">
    <property type="interactions" value="836"/>
</dbReference>
<dbReference type="iPTMnet" id="C0HKE8"/>
<dbReference type="jPOST" id="C0HKE8"/>
<dbReference type="Pumba" id="C0HKE8"/>
<dbReference type="Antibodypedia" id="72464">
    <property type="antibodies" value="208 antibodies from 18 providers"/>
</dbReference>
<dbReference type="DNASU" id="319172"/>
<dbReference type="Ensembl" id="ENSMUST00000070124.5">
    <property type="protein sequence ID" value="ENSMUSP00000088285.3"/>
    <property type="gene ID" value="ENSMUSG00000071516.3"/>
</dbReference>
<dbReference type="Ensembl" id="ENSMUST00000078369.3">
    <property type="protein sequence ID" value="ENSMUSP00000077477.2"/>
    <property type="gene ID" value="ENSMUSG00000061615.3"/>
</dbReference>
<dbReference type="Ensembl" id="ENSMUST00000081342.7">
    <property type="protein sequence ID" value="ENSMUSP00000080088.6"/>
    <property type="gene ID" value="ENSMUSG00000094777.3"/>
</dbReference>
<dbReference type="Ensembl" id="ENSMUST00000090776.7">
    <property type="protein sequence ID" value="ENSMUSP00000088281.5"/>
    <property type="gene ID" value="ENSMUSG00000071478.7"/>
</dbReference>
<dbReference type="Ensembl" id="ENSMUST00000091741.6">
    <property type="protein sequence ID" value="ENSMUSP00000089335.5"/>
    <property type="gene ID" value="ENSMUSG00000069301.6"/>
</dbReference>
<dbReference type="Ensembl" id="ENSMUST00000091745.6">
    <property type="protein sequence ID" value="ENSMUSP00000089339.6"/>
    <property type="gene ID" value="ENSMUSG00000094248.2"/>
</dbReference>
<dbReference type="Ensembl" id="ENSMUST00000091751.3">
    <property type="protein sequence ID" value="ENSMUSP00000089345.3"/>
    <property type="gene ID" value="ENSMUSG00000069309.3"/>
</dbReference>
<dbReference type="Ensembl" id="ENSMUST00000102969.6">
    <property type="protein sequence ID" value="ENSMUSP00000100034.4"/>
    <property type="gene ID" value="ENSMUSG00000069272.7"/>
</dbReference>
<dbReference type="Ensembl" id="ENSMUST00000171127.4">
    <property type="protein sequence ID" value="ENSMUSP00000127684.2"/>
    <property type="gene ID" value="ENSMUSG00000069270.7"/>
</dbReference>
<dbReference type="GeneID" id="665433"/>
<dbReference type="KEGG" id="mmu:319164"/>
<dbReference type="KEGG" id="mmu:319165"/>
<dbReference type="KEGG" id="mmu:319166"/>
<dbReference type="KEGG" id="mmu:319167"/>
<dbReference type="KEGG" id="mmu:319170"/>
<dbReference type="KEGG" id="mmu:319171"/>
<dbReference type="KEGG" id="mmu:319172"/>
<dbReference type="KEGG" id="mmu:319191"/>
<dbReference type="KEGG" id="mmu:665433"/>
<dbReference type="AGR" id="MGI:2448302"/>
<dbReference type="CTD" id="3012"/>
<dbReference type="CTD" id="3013"/>
<dbReference type="CTD" id="319170"/>
<dbReference type="CTD" id="319171"/>
<dbReference type="CTD" id="665433"/>
<dbReference type="CTD" id="8329"/>
<dbReference type="CTD" id="8334"/>
<dbReference type="CTD" id="8335"/>
<dbReference type="CTD" id="8969"/>
<dbReference type="MGI" id="MGI:2448302">
    <property type="gene designation" value="Hist1h2ao"/>
</dbReference>
<dbReference type="VEuPathDB" id="HostDB:ENSMUSG00000061615"/>
<dbReference type="VEuPathDB" id="HostDB:ENSMUSG00000069270"/>
<dbReference type="VEuPathDB" id="HostDB:ENSMUSG00000069272"/>
<dbReference type="VEuPathDB" id="HostDB:ENSMUSG00000069301"/>
<dbReference type="VEuPathDB" id="HostDB:ENSMUSG00000069309"/>
<dbReference type="VEuPathDB" id="HostDB:ENSMUSG00000071478"/>
<dbReference type="VEuPathDB" id="HostDB:ENSMUSG00000071516"/>
<dbReference type="VEuPathDB" id="HostDB:ENSMUSG00000094248"/>
<dbReference type="VEuPathDB" id="HostDB:ENSMUSG00000094777"/>
<dbReference type="InParanoid" id="C0HKE8"/>
<dbReference type="OMA" id="TEDCRQT"/>
<dbReference type="OrthoDB" id="9610409at2759"/>
<dbReference type="Reactome" id="R-MMU-110330">
    <property type="pathway name" value="Recognition and association of DNA glycosylase with site containing an affected purine"/>
</dbReference>
<dbReference type="Reactome" id="R-MMU-110331">
    <property type="pathway name" value="Cleavage of the damaged purine"/>
</dbReference>
<dbReference type="Reactome" id="R-MMU-212300">
    <property type="pathway name" value="PRC2 methylates histones and DNA"/>
</dbReference>
<dbReference type="Reactome" id="R-MMU-2299718">
    <property type="pathway name" value="Condensation of Prophase Chromosomes"/>
</dbReference>
<dbReference type="Reactome" id="R-MMU-2559586">
    <property type="pathway name" value="DNA Damage/Telomere Stress Induced Senescence"/>
</dbReference>
<dbReference type="Reactome" id="R-MMU-3214815">
    <property type="pathway name" value="HDACs deacetylate histones"/>
</dbReference>
<dbReference type="Reactome" id="R-MMU-3214858">
    <property type="pathway name" value="RMTs methylate histone arginines"/>
</dbReference>
<dbReference type="Reactome" id="R-MMU-5689603">
    <property type="pathway name" value="UCH proteinases"/>
</dbReference>
<dbReference type="Reactome" id="R-MMU-5689880">
    <property type="pathway name" value="Ub-specific processing proteases"/>
</dbReference>
<dbReference type="Reactome" id="R-MMU-5689901">
    <property type="pathway name" value="Metalloprotease DUBs"/>
</dbReference>
<dbReference type="Reactome" id="R-MMU-606279">
    <property type="pathway name" value="Deposition of new CENPA-containing nucleosomes at the centromere"/>
</dbReference>
<dbReference type="Reactome" id="R-MMU-8936459">
    <property type="pathway name" value="RUNX1 regulates genes involved in megakaryocyte differentiation and platelet function"/>
</dbReference>
<dbReference type="Reactome" id="R-MMU-9670095">
    <property type="pathway name" value="Inhibition of DNA recombination at telomere"/>
</dbReference>
<dbReference type="Reactome" id="R-MMU-9841922">
    <property type="pathway name" value="MLL4 and MLL3 complexes regulate expression of PPARG target genes in adipogenesis and hepatic steatosis"/>
</dbReference>
<dbReference type="Reactome" id="R-MMU-9843940">
    <property type="pathway name" value="Regulation of endogenous retroelements by KRAB-ZFP proteins"/>
</dbReference>
<dbReference type="BioGRID-ORCS" id="319164">
    <property type="hits" value="12 hits in 61 CRISPR screens"/>
</dbReference>
<dbReference type="BioGRID-ORCS" id="319165">
    <property type="hits" value="11 hits in 41 CRISPR screens"/>
</dbReference>
<dbReference type="BioGRID-ORCS" id="319166">
    <property type="hits" value="13 hits in 57 CRISPR screens"/>
</dbReference>
<dbReference type="BioGRID-ORCS" id="319167">
    <property type="hits" value="12 hits in 44 CRISPR screens"/>
</dbReference>
<dbReference type="BioGRID-ORCS" id="319170">
    <property type="hits" value="14 hits in 59 CRISPR screens"/>
</dbReference>
<dbReference type="BioGRID-ORCS" id="319171">
    <property type="hits" value="14 hits in 43 CRISPR screens"/>
</dbReference>
<dbReference type="BioGRID-ORCS" id="319172">
    <property type="hits" value="9 hits in 57 CRISPR screens"/>
</dbReference>
<dbReference type="BioGRID-ORCS" id="319191">
    <property type="hits" value="10 hits in 58 CRISPR screens"/>
</dbReference>
<dbReference type="BioGRID-ORCS" id="665433">
    <property type="hits" value="10 hits in 42 CRISPR screens"/>
</dbReference>
<dbReference type="PRO" id="PR:C0HKE8"/>
<dbReference type="Proteomes" id="UP000000589">
    <property type="component" value="Chromosome 13"/>
</dbReference>
<dbReference type="RNAct" id="C0HKE8">
    <property type="molecule type" value="protein"/>
</dbReference>
<dbReference type="Bgee" id="ENSMUSG00000061615">
    <property type="expression patterns" value="Expressed in uterus and 49 other cell types or tissues"/>
</dbReference>
<dbReference type="ExpressionAtlas" id="C0HKE8">
    <property type="expression patterns" value="baseline and differential"/>
</dbReference>
<dbReference type="GO" id="GO:0000786">
    <property type="term" value="C:nucleosome"/>
    <property type="evidence" value="ECO:0007669"/>
    <property type="project" value="UniProtKB-KW"/>
</dbReference>
<dbReference type="GO" id="GO:0005634">
    <property type="term" value="C:nucleus"/>
    <property type="evidence" value="ECO:0007669"/>
    <property type="project" value="UniProtKB-SubCell"/>
</dbReference>
<dbReference type="GO" id="GO:0003677">
    <property type="term" value="F:DNA binding"/>
    <property type="evidence" value="ECO:0007669"/>
    <property type="project" value="UniProtKB-KW"/>
</dbReference>
<dbReference type="GO" id="GO:0046982">
    <property type="term" value="F:protein heterodimerization activity"/>
    <property type="evidence" value="ECO:0007669"/>
    <property type="project" value="InterPro"/>
</dbReference>
<dbReference type="GO" id="GO:0030527">
    <property type="term" value="F:structural constituent of chromatin"/>
    <property type="evidence" value="ECO:0007669"/>
    <property type="project" value="InterPro"/>
</dbReference>
<dbReference type="CDD" id="cd00074">
    <property type="entry name" value="HFD_H2A"/>
    <property type="match status" value="1"/>
</dbReference>
<dbReference type="FunFam" id="1.10.20.10:FF:000103">
    <property type="entry name" value="Histone H2A type 1"/>
    <property type="match status" value="1"/>
</dbReference>
<dbReference type="Gene3D" id="1.10.20.10">
    <property type="entry name" value="Histone, subunit A"/>
    <property type="match status" value="1"/>
</dbReference>
<dbReference type="InterPro" id="IPR009072">
    <property type="entry name" value="Histone-fold"/>
</dbReference>
<dbReference type="InterPro" id="IPR002119">
    <property type="entry name" value="Histone_H2A"/>
</dbReference>
<dbReference type="InterPro" id="IPR007125">
    <property type="entry name" value="Histone_H2A/H2B/H3"/>
</dbReference>
<dbReference type="InterPro" id="IPR032454">
    <property type="entry name" value="Histone_H2A_C"/>
</dbReference>
<dbReference type="InterPro" id="IPR032458">
    <property type="entry name" value="Histone_H2A_CS"/>
</dbReference>
<dbReference type="PANTHER" id="PTHR23430">
    <property type="entry name" value="HISTONE H2A"/>
    <property type="match status" value="1"/>
</dbReference>
<dbReference type="Pfam" id="PF00125">
    <property type="entry name" value="Histone"/>
    <property type="match status" value="1"/>
</dbReference>
<dbReference type="Pfam" id="PF16211">
    <property type="entry name" value="Histone_H2A_C"/>
    <property type="match status" value="1"/>
</dbReference>
<dbReference type="PRINTS" id="PR00620">
    <property type="entry name" value="HISTONEH2A"/>
</dbReference>
<dbReference type="SMART" id="SM00414">
    <property type="entry name" value="H2A"/>
    <property type="match status" value="1"/>
</dbReference>
<dbReference type="SUPFAM" id="SSF47113">
    <property type="entry name" value="Histone-fold"/>
    <property type="match status" value="1"/>
</dbReference>
<dbReference type="PROSITE" id="PS00046">
    <property type="entry name" value="HISTONE_H2A"/>
    <property type="match status" value="1"/>
</dbReference>
<organism>
    <name type="scientific">Mus musculus</name>
    <name type="common">Mouse</name>
    <dbReference type="NCBI Taxonomy" id="10090"/>
    <lineage>
        <taxon>Eukaryota</taxon>
        <taxon>Metazoa</taxon>
        <taxon>Chordata</taxon>
        <taxon>Craniata</taxon>
        <taxon>Vertebrata</taxon>
        <taxon>Euteleostomi</taxon>
        <taxon>Mammalia</taxon>
        <taxon>Eutheria</taxon>
        <taxon>Euarchontoglires</taxon>
        <taxon>Glires</taxon>
        <taxon>Rodentia</taxon>
        <taxon>Myomorpha</taxon>
        <taxon>Muroidea</taxon>
        <taxon>Muridae</taxon>
        <taxon>Murinae</taxon>
        <taxon>Mus</taxon>
        <taxon>Mus</taxon>
    </lineage>
</organism>
<protein>
    <recommendedName>
        <fullName evidence="13">Histone H2A type 1-O</fullName>
    </recommendedName>
</protein>
<sequence>MSGRGKQGGKARAKAKTRSSRAGLQFPVGRVHRLLRKGNYSERVGAGAPVYLAAVLEYLTAEILELAGNAARDNKKTRIIPRHLQLAIRNDEELNKLLGRVTIAQGGVLPNIQAVLLPKKTESHHKAKGK</sequence>
<evidence type="ECO:0000250" key="1">
    <source>
        <dbReference type="UniProtKB" id="P04908"/>
    </source>
</evidence>
<evidence type="ECO:0000250" key="2">
    <source>
        <dbReference type="UniProtKB" id="P0C0S5"/>
    </source>
</evidence>
<evidence type="ECO:0000250" key="3">
    <source>
        <dbReference type="UniProtKB" id="P0C0S8"/>
    </source>
</evidence>
<evidence type="ECO:0000256" key="4">
    <source>
        <dbReference type="SAM" id="MobiDB-lite"/>
    </source>
</evidence>
<evidence type="ECO:0000269" key="5">
    <source>
    </source>
</evidence>
<evidence type="ECO:0000269" key="6">
    <source>
    </source>
</evidence>
<evidence type="ECO:0000269" key="7">
    <source>
    </source>
</evidence>
<evidence type="ECO:0000269" key="8">
    <source>
    </source>
</evidence>
<evidence type="ECO:0000269" key="9">
    <source>
    </source>
</evidence>
<evidence type="ECO:0000269" key="10">
    <source>
    </source>
</evidence>
<evidence type="ECO:0000269" key="11">
    <source>
    </source>
</evidence>
<evidence type="ECO:0000269" key="12">
    <source>
    </source>
</evidence>
<evidence type="ECO:0000305" key="13"/>
<evidence type="ECO:0000312" key="14">
    <source>
        <dbReference type="EMBL" id="AAH62251.1"/>
    </source>
</evidence>
<evidence type="ECO:0000312" key="15">
    <source>
        <dbReference type="EMBL" id="AAH90402.1"/>
    </source>
</evidence>
<evidence type="ECO:0000312" key="16">
    <source>
        <dbReference type="EMBL" id="BAE27477.1"/>
    </source>
</evidence>
<evidence type="ECO:0000312" key="17">
    <source>
        <dbReference type="MGI" id="MGI:2448302"/>
    </source>
</evidence>